<feature type="signal peptide" evidence="2">
    <location>
        <begin position="1"/>
        <end position="38"/>
    </location>
</feature>
<feature type="chain" id="PRO_0000305178" description="Rhamnosyl O-methyltransferase">
    <location>
        <begin position="39"/>
        <end position="245"/>
    </location>
</feature>
<evidence type="ECO:0000250" key="1"/>
<evidence type="ECO:0000255" key="2"/>
<evidence type="ECO:0000305" key="3"/>
<reference key="1">
    <citation type="journal article" date="2003" name="Proc. Natl. Acad. Sci. U.S.A.">
        <title>The complete genome sequence of Mycobacterium bovis.</title>
        <authorList>
            <person name="Garnier T."/>
            <person name="Eiglmeier K."/>
            <person name="Camus J.-C."/>
            <person name="Medina N."/>
            <person name="Mansoor H."/>
            <person name="Pryor M."/>
            <person name="Duthoy S."/>
            <person name="Grondin S."/>
            <person name="Lacroix C."/>
            <person name="Monsempe C."/>
            <person name="Simon S."/>
            <person name="Harris B."/>
            <person name="Atkin R."/>
            <person name="Doggett J."/>
            <person name="Mayes R."/>
            <person name="Keating L."/>
            <person name="Wheeler P.R."/>
            <person name="Parkhill J."/>
            <person name="Barrell B.G."/>
            <person name="Cole S.T."/>
            <person name="Gordon S.V."/>
            <person name="Hewinson R.G."/>
        </authorList>
    </citation>
    <scope>NUCLEOTIDE SEQUENCE [LARGE SCALE GENOMIC DNA]</scope>
    <source>
        <strain>ATCC BAA-935 / AF2122/97</strain>
    </source>
</reference>
<reference key="2">
    <citation type="journal article" date="2017" name="Genome Announc.">
        <title>Updated reference genome sequence and annotation of Mycobacterium bovis AF2122/97.</title>
        <authorList>
            <person name="Malone K.M."/>
            <person name="Farrell D."/>
            <person name="Stuber T.P."/>
            <person name="Schubert O.T."/>
            <person name="Aebersold R."/>
            <person name="Robbe-Austerman S."/>
            <person name="Gordon S.V."/>
        </authorList>
    </citation>
    <scope>NUCLEOTIDE SEQUENCE [LARGE SCALE GENOMIC DNA]</scope>
    <scope>GENOME REANNOTATION</scope>
    <source>
        <strain>ATCC BAA-935 / AF2122/97</strain>
    </source>
</reference>
<keyword id="KW-0444">Lipid biosynthesis</keyword>
<keyword id="KW-0443">Lipid metabolism</keyword>
<keyword id="KW-0489">Methyltransferase</keyword>
<keyword id="KW-1185">Reference proteome</keyword>
<keyword id="KW-0732">Signal</keyword>
<keyword id="KW-0808">Transferase</keyword>
<name>RNMT_MYCBO</name>
<dbReference type="EC" id="2.1.1.-"/>
<dbReference type="EMBL" id="LT708304">
    <property type="protein sequence ID" value="SIU01606.1"/>
    <property type="molecule type" value="Genomic_DNA"/>
</dbReference>
<dbReference type="RefSeq" id="NP_856628.1">
    <property type="nucleotide sequence ID" value="NC_002945.3"/>
</dbReference>
<dbReference type="RefSeq" id="WP_003414919.1">
    <property type="nucleotide sequence ID" value="NC_002945.4"/>
</dbReference>
<dbReference type="SMR" id="Q7TXJ7"/>
<dbReference type="KEGG" id="mbo:BQ2027_MB2983C"/>
<dbReference type="PATRIC" id="fig|233413.5.peg.3279"/>
<dbReference type="Proteomes" id="UP000001419">
    <property type="component" value="Chromosome"/>
</dbReference>
<dbReference type="GO" id="GO:0005886">
    <property type="term" value="C:plasma membrane"/>
    <property type="evidence" value="ECO:0007669"/>
    <property type="project" value="TreeGrafter"/>
</dbReference>
<dbReference type="GO" id="GO:0008168">
    <property type="term" value="F:methyltransferase activity"/>
    <property type="evidence" value="ECO:0007669"/>
    <property type="project" value="UniProtKB-KW"/>
</dbReference>
<dbReference type="GO" id="GO:0071770">
    <property type="term" value="P:DIM/DIP cell wall layer assembly"/>
    <property type="evidence" value="ECO:0007669"/>
    <property type="project" value="TreeGrafter"/>
</dbReference>
<dbReference type="GO" id="GO:0008610">
    <property type="term" value="P:lipid biosynthetic process"/>
    <property type="evidence" value="ECO:0007669"/>
    <property type="project" value="InterPro"/>
</dbReference>
<dbReference type="GO" id="GO:0032259">
    <property type="term" value="P:methylation"/>
    <property type="evidence" value="ECO:0007669"/>
    <property type="project" value="UniProtKB-KW"/>
</dbReference>
<dbReference type="Gene3D" id="3.40.50.150">
    <property type="entry name" value="Vaccinia Virus protein VP39"/>
    <property type="match status" value="1"/>
</dbReference>
<dbReference type="InterPro" id="IPR054932">
    <property type="entry name" value="RhmsylMtase"/>
</dbReference>
<dbReference type="InterPro" id="IPR007072">
    <property type="entry name" value="RNMT_CmcI"/>
</dbReference>
<dbReference type="InterPro" id="IPR029063">
    <property type="entry name" value="SAM-dependent_MTases_sf"/>
</dbReference>
<dbReference type="NCBIfam" id="NF045824">
    <property type="entry name" value="RhmsylMtase"/>
    <property type="match status" value="1"/>
</dbReference>
<dbReference type="PANTHER" id="PTHR40048">
    <property type="entry name" value="RHAMNOSYL O-METHYLTRANSFERASE"/>
    <property type="match status" value="1"/>
</dbReference>
<dbReference type="PANTHER" id="PTHR40048:SF1">
    <property type="entry name" value="RHAMNOSYL O-METHYLTRANSFERASE"/>
    <property type="match status" value="1"/>
</dbReference>
<dbReference type="Pfam" id="PF04989">
    <property type="entry name" value="RMNT_CmcI"/>
    <property type="match status" value="1"/>
</dbReference>
<dbReference type="SUPFAM" id="SSF53335">
    <property type="entry name" value="S-adenosyl-L-methionine-dependent methyltransferases"/>
    <property type="match status" value="1"/>
</dbReference>
<gene>
    <name type="ordered locus">BQ2027_MB2983C</name>
</gene>
<protein>
    <recommendedName>
        <fullName>Rhamnosyl O-methyltransferase</fullName>
        <ecNumber>2.1.1.-</ecNumber>
    </recommendedName>
</protein>
<proteinExistence type="inferred from homology"/>
<comment type="function">
    <text evidence="1">Catalyzes the O-methylation of the hydroxyl group located on C-2 of the first rhamnosyl residue linked to the phenolic group of glycosylated phenolphthiocerol dimycocerosates (PGL) and p-hydroxybenzoic acid derivatives (p-HBAD).</text>
</comment>
<comment type="similarity">
    <text evidence="3">Belongs to the rhamnosyl O-methyltransferase family.</text>
</comment>
<sequence length="245" mass="27845">MGLVWRSRTSLVGQLIGLVRLVASFAAQLFYRPSDAVAEEYHKWYYGNLVWTKTTYMGINCWKSVSDMWNYQEILSELQPSLVIEFGTRYGGSAVYFANIMRQIGQPFKVLTVDNSHKALDPRARREPDVLFVESSSTDPAIAEQIQRLKNEYPGKIFAILDSDHSMNHVLAEMKLLRPLLSAGDYLVVEDSNINGHPVLPGFGPGPYEAIEAYEDEFPNDYKHDAERENKFGWTSAPNGFLIRN</sequence>
<accession>Q7TXJ7</accession>
<accession>A0A1R3Y3H3</accession>
<accession>X2BMP5</accession>
<organism>
    <name type="scientific">Mycobacterium bovis (strain ATCC BAA-935 / AF2122/97)</name>
    <dbReference type="NCBI Taxonomy" id="233413"/>
    <lineage>
        <taxon>Bacteria</taxon>
        <taxon>Bacillati</taxon>
        <taxon>Actinomycetota</taxon>
        <taxon>Actinomycetes</taxon>
        <taxon>Mycobacteriales</taxon>
        <taxon>Mycobacteriaceae</taxon>
        <taxon>Mycobacterium</taxon>
        <taxon>Mycobacterium tuberculosis complex</taxon>
    </lineage>
</organism>